<evidence type="ECO:0000255" key="1">
    <source>
        <dbReference type="HAMAP-Rule" id="MF_00213"/>
    </source>
</evidence>
<evidence type="ECO:0000305" key="2"/>
<comment type="function">
    <text evidence="1">Involved in the maturation of [NiFe] hydrogenases. Required for nickel insertion into the metal center of the hydrogenase.</text>
</comment>
<comment type="similarity">
    <text evidence="1 2">Belongs to the HypA/HybF family.</text>
</comment>
<sequence length="115" mass="12783">MHEFSIVQSLLTLIEDYARENNAKSVTKVVVSIGVLSGVEPHLLEMAFNTFKEGTVAEKAELIMEIEKLKIKCMDCGKESEKEELNMLCPGCGSLNTQIISGQDMFLKSLELEVD</sequence>
<keyword id="KW-0479">Metal-binding</keyword>
<keyword id="KW-0533">Nickel</keyword>
<keyword id="KW-1185">Reference proteome</keyword>
<keyword id="KW-0862">Zinc</keyword>
<accession>O67133</accession>
<reference key="1">
    <citation type="journal article" date="1998" name="Nature">
        <title>The complete genome of the hyperthermophilic bacterium Aquifex aeolicus.</title>
        <authorList>
            <person name="Deckert G."/>
            <person name="Warren P.V."/>
            <person name="Gaasterland T."/>
            <person name="Young W.G."/>
            <person name="Lenox A.L."/>
            <person name="Graham D.E."/>
            <person name="Overbeek R."/>
            <person name="Snead M.A."/>
            <person name="Keller M."/>
            <person name="Aujay M."/>
            <person name="Huber R."/>
            <person name="Feldman R.A."/>
            <person name="Short J.M."/>
            <person name="Olsen G.J."/>
            <person name="Swanson R.V."/>
        </authorList>
    </citation>
    <scope>NUCLEOTIDE SEQUENCE [LARGE SCALE GENOMIC DNA]</scope>
    <source>
        <strain>VF5</strain>
    </source>
</reference>
<name>HYPA_AQUAE</name>
<proteinExistence type="inferred from homology"/>
<protein>
    <recommendedName>
        <fullName evidence="1">Hydrogenase maturation factor HypA</fullName>
    </recommendedName>
</protein>
<dbReference type="EMBL" id="AE000657">
    <property type="protein sequence ID" value="AAC07096.1"/>
    <property type="molecule type" value="Genomic_DNA"/>
</dbReference>
<dbReference type="PIR" id="B70388">
    <property type="entry name" value="B70388"/>
</dbReference>
<dbReference type="RefSeq" id="NP_213696.1">
    <property type="nucleotide sequence ID" value="NC_000918.1"/>
</dbReference>
<dbReference type="RefSeq" id="WP_010880634.1">
    <property type="nucleotide sequence ID" value="NC_000918.1"/>
</dbReference>
<dbReference type="SMR" id="O67133"/>
<dbReference type="FunCoup" id="O67133">
    <property type="interactions" value="35"/>
</dbReference>
<dbReference type="STRING" id="224324.aq_1021"/>
<dbReference type="EnsemblBacteria" id="AAC07096">
    <property type="protein sequence ID" value="AAC07096"/>
    <property type="gene ID" value="aq_1021"/>
</dbReference>
<dbReference type="KEGG" id="aae:aq_1021"/>
<dbReference type="PATRIC" id="fig|224324.8.peg.798"/>
<dbReference type="eggNOG" id="COG0375">
    <property type="taxonomic scope" value="Bacteria"/>
</dbReference>
<dbReference type="HOGENOM" id="CLU_126929_6_0_0"/>
<dbReference type="InParanoid" id="O67133"/>
<dbReference type="OrthoDB" id="9800361at2"/>
<dbReference type="Proteomes" id="UP000000798">
    <property type="component" value="Chromosome"/>
</dbReference>
<dbReference type="GO" id="GO:0016151">
    <property type="term" value="F:nickel cation binding"/>
    <property type="evidence" value="ECO:0000318"/>
    <property type="project" value="GO_Central"/>
</dbReference>
<dbReference type="GO" id="GO:0008270">
    <property type="term" value="F:zinc ion binding"/>
    <property type="evidence" value="ECO:0000318"/>
    <property type="project" value="GO_Central"/>
</dbReference>
<dbReference type="GO" id="GO:0051604">
    <property type="term" value="P:protein maturation"/>
    <property type="evidence" value="ECO:0000318"/>
    <property type="project" value="GO_Central"/>
</dbReference>
<dbReference type="GO" id="GO:0036211">
    <property type="term" value="P:protein modification process"/>
    <property type="evidence" value="ECO:0007669"/>
    <property type="project" value="UniProtKB-UniRule"/>
</dbReference>
<dbReference type="FunFam" id="3.30.2320.80:FF:000001">
    <property type="entry name" value="Hydrogenase maturation factor HypA"/>
    <property type="match status" value="1"/>
</dbReference>
<dbReference type="Gene3D" id="3.30.2320.80">
    <property type="match status" value="1"/>
</dbReference>
<dbReference type="HAMAP" id="MF_00213">
    <property type="entry name" value="HypA_HybF"/>
    <property type="match status" value="1"/>
</dbReference>
<dbReference type="InterPro" id="IPR020538">
    <property type="entry name" value="Hydgase_Ni_incorp_HypA/HybF_CS"/>
</dbReference>
<dbReference type="InterPro" id="IPR000688">
    <property type="entry name" value="HypA/HybF"/>
</dbReference>
<dbReference type="NCBIfam" id="TIGR00100">
    <property type="entry name" value="hypA"/>
    <property type="match status" value="1"/>
</dbReference>
<dbReference type="PANTHER" id="PTHR34535">
    <property type="entry name" value="HYDROGENASE MATURATION FACTOR HYPA"/>
    <property type="match status" value="1"/>
</dbReference>
<dbReference type="PANTHER" id="PTHR34535:SF3">
    <property type="entry name" value="HYDROGENASE MATURATION FACTOR HYPA"/>
    <property type="match status" value="1"/>
</dbReference>
<dbReference type="Pfam" id="PF01155">
    <property type="entry name" value="HypA"/>
    <property type="match status" value="1"/>
</dbReference>
<dbReference type="PIRSF" id="PIRSF004761">
    <property type="entry name" value="Hydrgn_mat_HypA"/>
    <property type="match status" value="1"/>
</dbReference>
<dbReference type="PROSITE" id="PS01249">
    <property type="entry name" value="HYPA"/>
    <property type="match status" value="1"/>
</dbReference>
<feature type="chain" id="PRO_0000129072" description="Hydrogenase maturation factor HypA">
    <location>
        <begin position="1"/>
        <end position="115"/>
    </location>
</feature>
<feature type="binding site" evidence="1">
    <location>
        <position position="2"/>
    </location>
    <ligand>
        <name>Ni(2+)</name>
        <dbReference type="ChEBI" id="CHEBI:49786"/>
    </ligand>
</feature>
<feature type="binding site" evidence="1">
    <location>
        <position position="73"/>
    </location>
    <ligand>
        <name>Zn(2+)</name>
        <dbReference type="ChEBI" id="CHEBI:29105"/>
    </ligand>
</feature>
<feature type="binding site" evidence="1">
    <location>
        <position position="76"/>
    </location>
    <ligand>
        <name>Zn(2+)</name>
        <dbReference type="ChEBI" id="CHEBI:29105"/>
    </ligand>
</feature>
<feature type="binding site" evidence="1">
    <location>
        <position position="89"/>
    </location>
    <ligand>
        <name>Zn(2+)</name>
        <dbReference type="ChEBI" id="CHEBI:29105"/>
    </ligand>
</feature>
<feature type="binding site" evidence="1">
    <location>
        <position position="92"/>
    </location>
    <ligand>
        <name>Zn(2+)</name>
        <dbReference type="ChEBI" id="CHEBI:29105"/>
    </ligand>
</feature>
<gene>
    <name evidence="1" type="primary">hypA</name>
    <name type="ordered locus">aq_1021</name>
</gene>
<organism>
    <name type="scientific">Aquifex aeolicus (strain VF5)</name>
    <dbReference type="NCBI Taxonomy" id="224324"/>
    <lineage>
        <taxon>Bacteria</taxon>
        <taxon>Pseudomonadati</taxon>
        <taxon>Aquificota</taxon>
        <taxon>Aquificia</taxon>
        <taxon>Aquificales</taxon>
        <taxon>Aquificaceae</taxon>
        <taxon>Aquifex</taxon>
    </lineage>
</organism>